<feature type="chain" id="PRO_0000159978" description="Superoxide dismutase [Fe]">
    <location>
        <begin position="1"/>
        <end position="193"/>
    </location>
</feature>
<feature type="binding site" evidence="1">
    <location>
        <position position="27"/>
    </location>
    <ligand>
        <name>Fe cation</name>
        <dbReference type="ChEBI" id="CHEBI:24875"/>
    </ligand>
</feature>
<feature type="binding site" evidence="1">
    <location>
        <position position="74"/>
    </location>
    <ligand>
        <name>Fe cation</name>
        <dbReference type="ChEBI" id="CHEBI:24875"/>
    </ligand>
</feature>
<feature type="binding site" evidence="1">
    <location>
        <position position="157"/>
    </location>
    <ligand>
        <name>Fe cation</name>
        <dbReference type="ChEBI" id="CHEBI:24875"/>
    </ligand>
</feature>
<feature type="binding site" evidence="1">
    <location>
        <position position="161"/>
    </location>
    <ligand>
        <name>Fe cation</name>
        <dbReference type="ChEBI" id="CHEBI:24875"/>
    </ligand>
</feature>
<feature type="turn" evidence="3">
    <location>
        <begin position="12"/>
        <end position="18"/>
    </location>
</feature>
<feature type="helix" evidence="3">
    <location>
        <begin position="21"/>
        <end position="29"/>
    </location>
</feature>
<feature type="helix" evidence="3">
    <location>
        <begin position="31"/>
        <end position="43"/>
    </location>
</feature>
<feature type="turn" evidence="3">
    <location>
        <begin position="47"/>
        <end position="50"/>
    </location>
</feature>
<feature type="helix" evidence="3">
    <location>
        <begin position="53"/>
        <end position="59"/>
    </location>
</feature>
<feature type="helix" evidence="3">
    <location>
        <begin position="62"/>
        <end position="79"/>
    </location>
</feature>
<feature type="helix" evidence="3">
    <location>
        <begin position="91"/>
        <end position="101"/>
    </location>
</feature>
<feature type="helix" evidence="3">
    <location>
        <begin position="104"/>
        <end position="117"/>
    </location>
</feature>
<feature type="strand" evidence="3">
    <location>
        <begin position="120"/>
        <end position="128"/>
    </location>
</feature>
<feature type="strand" evidence="3">
    <location>
        <begin position="134"/>
        <end position="140"/>
    </location>
</feature>
<feature type="helix" evidence="3">
    <location>
        <begin position="145"/>
        <end position="148"/>
    </location>
</feature>
<feature type="strand" evidence="3">
    <location>
        <begin position="151"/>
        <end position="157"/>
    </location>
</feature>
<feature type="helix" evidence="3">
    <location>
        <begin position="160"/>
        <end position="162"/>
    </location>
</feature>
<feature type="helix" evidence="3">
    <location>
        <begin position="164"/>
        <end position="167"/>
    </location>
</feature>
<feature type="helix" evidence="3">
    <location>
        <begin position="171"/>
        <end position="181"/>
    </location>
</feature>
<feature type="helix" evidence="3">
    <location>
        <begin position="184"/>
        <end position="191"/>
    </location>
</feature>
<organism>
    <name type="scientific">Coxiella burnetii (strain RSA 493 / Nine Mile phase I)</name>
    <dbReference type="NCBI Taxonomy" id="227377"/>
    <lineage>
        <taxon>Bacteria</taxon>
        <taxon>Pseudomonadati</taxon>
        <taxon>Pseudomonadota</taxon>
        <taxon>Gammaproteobacteria</taxon>
        <taxon>Legionellales</taxon>
        <taxon>Coxiellaceae</taxon>
        <taxon>Coxiella</taxon>
    </lineage>
</organism>
<protein>
    <recommendedName>
        <fullName>Superoxide dismutase [Fe]</fullName>
        <ecNumber>1.15.1.1</ecNumber>
    </recommendedName>
</protein>
<comment type="function">
    <text>Destroys superoxide anion radicals which are normally produced within the cells and which are toxic to biological systems.</text>
</comment>
<comment type="catalytic activity">
    <reaction>
        <text>2 superoxide + 2 H(+) = H2O2 + O2</text>
        <dbReference type="Rhea" id="RHEA:20696"/>
        <dbReference type="ChEBI" id="CHEBI:15378"/>
        <dbReference type="ChEBI" id="CHEBI:15379"/>
        <dbReference type="ChEBI" id="CHEBI:16240"/>
        <dbReference type="ChEBI" id="CHEBI:18421"/>
        <dbReference type="EC" id="1.15.1.1"/>
    </reaction>
</comment>
<comment type="cofactor">
    <cofactor evidence="1">
        <name>Fe cation</name>
        <dbReference type="ChEBI" id="CHEBI:24875"/>
    </cofactor>
    <text evidence="1">Binds 1 Fe cation per subunit.</text>
</comment>
<comment type="subunit">
    <text>Homodimer.</text>
</comment>
<comment type="similarity">
    <text evidence="2">Belongs to the iron/manganese superoxide dismutase family.</text>
</comment>
<keyword id="KW-0002">3D-structure</keyword>
<keyword id="KW-0408">Iron</keyword>
<keyword id="KW-0479">Metal-binding</keyword>
<keyword id="KW-0560">Oxidoreductase</keyword>
<keyword id="KW-1185">Reference proteome</keyword>
<reference key="1">
    <citation type="journal article" date="1990" name="Nucleic Acids Res.">
        <title>Nucleotide sequence of Coxiella burnetii superoxide dismutase.</title>
        <authorList>
            <person name="Heinzen R.A."/>
            <person name="Frazier M.E."/>
            <person name="Mallavia L.P."/>
        </authorList>
    </citation>
    <scope>NUCLEOTIDE SEQUENCE [GENOMIC DNA]</scope>
    <source>
        <strain>Hamilton</strain>
    </source>
</reference>
<reference key="2">
    <citation type="journal article" date="1992" name="Infect. Immun.">
        <title>Coxiella burnetii superoxide dismutase gene: cloning, sequencing, and expression in Escherichia coli.</title>
        <authorList>
            <person name="Heinzen R.A."/>
            <person name="Frazier M.E."/>
            <person name="Mallavia L.P."/>
        </authorList>
    </citation>
    <scope>NUCLEOTIDE SEQUENCE [GENOMIC DNA]</scope>
    <source>
        <strain>Hamilton</strain>
    </source>
</reference>
<reference key="3">
    <citation type="journal article" date="2003" name="Proc. Natl. Acad. Sci. U.S.A.">
        <title>Complete genome sequence of the Q-fever pathogen, Coxiella burnetii.</title>
        <authorList>
            <person name="Seshadri R."/>
            <person name="Paulsen I.T."/>
            <person name="Eisen J.A."/>
            <person name="Read T.D."/>
            <person name="Nelson K.E."/>
            <person name="Nelson W.C."/>
            <person name="Ward N.L."/>
            <person name="Tettelin H."/>
            <person name="Davidsen T.M."/>
            <person name="Beanan M.J."/>
            <person name="DeBoy R.T."/>
            <person name="Daugherty S.C."/>
            <person name="Brinkac L.M."/>
            <person name="Madupu R."/>
            <person name="Dodson R.J."/>
            <person name="Khouri H.M."/>
            <person name="Lee K.H."/>
            <person name="Carty H.A."/>
            <person name="Scanlan D."/>
            <person name="Heinzen R.A."/>
            <person name="Thompson H.A."/>
            <person name="Samuel J.E."/>
            <person name="Fraser C.M."/>
            <person name="Heidelberg J.F."/>
        </authorList>
    </citation>
    <scope>NUCLEOTIDE SEQUENCE [LARGE SCALE GENOMIC DNA]</scope>
    <source>
        <strain>RSA 493 / Nine Mile phase I</strain>
    </source>
</reference>
<sequence>MAFELPDLPYKLNALEPHISQETLEYHHGKHHRAYVNKLNKLIEGTPFEKEPLEEIIRKSDGGIFNNAAQHWNHTFYWHCMSPDGGGDPSGELASAIDKTFGSLEKFKALFTDSANNHFGSGWAWLVKDNNGKLEVLSTVNARNPMTEGKKPLMTCDVWEHAYYIDTRNDRPKYVNNFWQVVNWDFVMKNFKS</sequence>
<evidence type="ECO:0000250" key="1"/>
<evidence type="ECO:0000305" key="2"/>
<evidence type="ECO:0007829" key="3">
    <source>
        <dbReference type="PDB" id="3TQJ"/>
    </source>
</evidence>
<proteinExistence type="evidence at protein level"/>
<gene>
    <name type="primary">sodB</name>
    <name type="ordered locus">CBU_1708</name>
</gene>
<accession>P19685</accession>
<name>SODF_COXBU</name>
<dbReference type="EC" id="1.15.1.1"/>
<dbReference type="EMBL" id="X54627">
    <property type="protein sequence ID" value="CAA38444.1"/>
    <property type="molecule type" value="Genomic_DNA"/>
</dbReference>
<dbReference type="EMBL" id="M74242">
    <property type="protein sequence ID" value="AAA23311.1"/>
    <property type="molecule type" value="Genomic_DNA"/>
</dbReference>
<dbReference type="EMBL" id="AE016828">
    <property type="protein sequence ID" value="AAO91203.1"/>
    <property type="molecule type" value="Genomic_DNA"/>
</dbReference>
<dbReference type="PIR" id="A44791">
    <property type="entry name" value="A44791"/>
</dbReference>
<dbReference type="RefSeq" id="NP_820689.1">
    <property type="nucleotide sequence ID" value="NC_002971.4"/>
</dbReference>
<dbReference type="RefSeq" id="WP_005770533.1">
    <property type="nucleotide sequence ID" value="NZ_CCYB01000004.1"/>
</dbReference>
<dbReference type="PDB" id="3TQJ">
    <property type="method" value="X-ray"/>
    <property type="resolution" value="2.00 A"/>
    <property type="chains" value="A/B=1-193"/>
</dbReference>
<dbReference type="PDBsum" id="3TQJ"/>
<dbReference type="SMR" id="P19685"/>
<dbReference type="STRING" id="227377.CBU_1708"/>
<dbReference type="EnsemblBacteria" id="AAO91203">
    <property type="protein sequence ID" value="AAO91203"/>
    <property type="gene ID" value="CBU_1708"/>
</dbReference>
<dbReference type="GeneID" id="1209619"/>
<dbReference type="KEGG" id="cbu:CBU_1708"/>
<dbReference type="PATRIC" id="fig|227377.7.peg.1694"/>
<dbReference type="eggNOG" id="COG0605">
    <property type="taxonomic scope" value="Bacteria"/>
</dbReference>
<dbReference type="HOGENOM" id="CLU_031625_0_0_6"/>
<dbReference type="OrthoDB" id="9803125at2"/>
<dbReference type="EvolutionaryTrace" id="P19685"/>
<dbReference type="Proteomes" id="UP000002671">
    <property type="component" value="Chromosome"/>
</dbReference>
<dbReference type="GO" id="GO:0046872">
    <property type="term" value="F:metal ion binding"/>
    <property type="evidence" value="ECO:0007669"/>
    <property type="project" value="UniProtKB-KW"/>
</dbReference>
<dbReference type="GO" id="GO:0004784">
    <property type="term" value="F:superoxide dismutase activity"/>
    <property type="evidence" value="ECO:0007669"/>
    <property type="project" value="UniProtKB-EC"/>
</dbReference>
<dbReference type="FunFam" id="1.10.287.990:FF:000002">
    <property type="entry name" value="Superoxide dismutase"/>
    <property type="match status" value="1"/>
</dbReference>
<dbReference type="FunFam" id="3.55.40.20:FF:000001">
    <property type="entry name" value="Superoxide dismutase"/>
    <property type="match status" value="1"/>
</dbReference>
<dbReference type="Gene3D" id="1.10.287.990">
    <property type="entry name" value="Fe,Mn superoxide dismutase (SOD) domain"/>
    <property type="match status" value="1"/>
</dbReference>
<dbReference type="Gene3D" id="3.55.40.20">
    <property type="entry name" value="Iron/manganese superoxide dismutase, C-terminal domain"/>
    <property type="match status" value="1"/>
</dbReference>
<dbReference type="InterPro" id="IPR001189">
    <property type="entry name" value="Mn/Fe_SOD"/>
</dbReference>
<dbReference type="InterPro" id="IPR019833">
    <property type="entry name" value="Mn/Fe_SOD_BS"/>
</dbReference>
<dbReference type="InterPro" id="IPR019832">
    <property type="entry name" value="Mn/Fe_SOD_C"/>
</dbReference>
<dbReference type="InterPro" id="IPR019831">
    <property type="entry name" value="Mn/Fe_SOD_N"/>
</dbReference>
<dbReference type="InterPro" id="IPR036324">
    <property type="entry name" value="Mn/Fe_SOD_N_sf"/>
</dbReference>
<dbReference type="InterPro" id="IPR036314">
    <property type="entry name" value="SOD_C_sf"/>
</dbReference>
<dbReference type="PANTHER" id="PTHR42769">
    <property type="entry name" value="SUPEROXIDE DISMUTASE"/>
    <property type="match status" value="1"/>
</dbReference>
<dbReference type="PANTHER" id="PTHR42769:SF3">
    <property type="entry name" value="SUPEROXIDE DISMUTASE [FE] 2, CHLOROPLASTIC"/>
    <property type="match status" value="1"/>
</dbReference>
<dbReference type="Pfam" id="PF02777">
    <property type="entry name" value="Sod_Fe_C"/>
    <property type="match status" value="1"/>
</dbReference>
<dbReference type="Pfam" id="PF00081">
    <property type="entry name" value="Sod_Fe_N"/>
    <property type="match status" value="1"/>
</dbReference>
<dbReference type="PIRSF" id="PIRSF000349">
    <property type="entry name" value="SODismutase"/>
    <property type="match status" value="1"/>
</dbReference>
<dbReference type="PRINTS" id="PR01703">
    <property type="entry name" value="MNSODISMTASE"/>
</dbReference>
<dbReference type="SUPFAM" id="SSF54719">
    <property type="entry name" value="Fe,Mn superoxide dismutase (SOD), C-terminal domain"/>
    <property type="match status" value="1"/>
</dbReference>
<dbReference type="SUPFAM" id="SSF46609">
    <property type="entry name" value="Fe,Mn superoxide dismutase (SOD), N-terminal domain"/>
    <property type="match status" value="1"/>
</dbReference>
<dbReference type="PROSITE" id="PS00088">
    <property type="entry name" value="SOD_MN"/>
    <property type="match status" value="1"/>
</dbReference>